<accession>Q2G870</accession>
<dbReference type="EMBL" id="CP000248">
    <property type="protein sequence ID" value="ABD25953.1"/>
    <property type="molecule type" value="Genomic_DNA"/>
</dbReference>
<dbReference type="RefSeq" id="WP_011445165.1">
    <property type="nucleotide sequence ID" value="NC_007794.1"/>
</dbReference>
<dbReference type="STRING" id="279238.Saro_1512"/>
<dbReference type="KEGG" id="nar:Saro_1512"/>
<dbReference type="eggNOG" id="COG3158">
    <property type="taxonomic scope" value="Bacteria"/>
</dbReference>
<dbReference type="HOGENOM" id="CLU_008142_4_2_5"/>
<dbReference type="Proteomes" id="UP000009134">
    <property type="component" value="Chromosome"/>
</dbReference>
<dbReference type="GO" id="GO:0005886">
    <property type="term" value="C:plasma membrane"/>
    <property type="evidence" value="ECO:0007669"/>
    <property type="project" value="UniProtKB-SubCell"/>
</dbReference>
<dbReference type="GO" id="GO:0015079">
    <property type="term" value="F:potassium ion transmembrane transporter activity"/>
    <property type="evidence" value="ECO:0007669"/>
    <property type="project" value="UniProtKB-UniRule"/>
</dbReference>
<dbReference type="GO" id="GO:0015293">
    <property type="term" value="F:symporter activity"/>
    <property type="evidence" value="ECO:0007669"/>
    <property type="project" value="UniProtKB-UniRule"/>
</dbReference>
<dbReference type="HAMAP" id="MF_01522">
    <property type="entry name" value="Kup"/>
    <property type="match status" value="1"/>
</dbReference>
<dbReference type="InterPro" id="IPR003855">
    <property type="entry name" value="K+_transporter"/>
</dbReference>
<dbReference type="InterPro" id="IPR053952">
    <property type="entry name" value="K_trans_C"/>
</dbReference>
<dbReference type="InterPro" id="IPR053951">
    <property type="entry name" value="K_trans_N"/>
</dbReference>
<dbReference type="InterPro" id="IPR023051">
    <property type="entry name" value="Kup"/>
</dbReference>
<dbReference type="PANTHER" id="PTHR30540:SF79">
    <property type="entry name" value="LOW AFFINITY POTASSIUM TRANSPORT SYSTEM PROTEIN KUP"/>
    <property type="match status" value="1"/>
</dbReference>
<dbReference type="PANTHER" id="PTHR30540">
    <property type="entry name" value="OSMOTIC STRESS POTASSIUM TRANSPORTER"/>
    <property type="match status" value="1"/>
</dbReference>
<dbReference type="Pfam" id="PF02705">
    <property type="entry name" value="K_trans"/>
    <property type="match status" value="1"/>
</dbReference>
<dbReference type="Pfam" id="PF22776">
    <property type="entry name" value="K_trans_C"/>
    <property type="match status" value="1"/>
</dbReference>
<feature type="chain" id="PRO_5000106186" description="Probable potassium transport system protein Kup 2">
    <location>
        <begin position="1"/>
        <end position="634"/>
    </location>
</feature>
<feature type="transmembrane region" description="Helical" evidence="1">
    <location>
        <begin position="15"/>
        <end position="35"/>
    </location>
</feature>
<feature type="transmembrane region" description="Helical" evidence="1">
    <location>
        <begin position="55"/>
        <end position="75"/>
    </location>
</feature>
<feature type="transmembrane region" description="Helical" evidence="1">
    <location>
        <begin position="101"/>
        <end position="121"/>
    </location>
</feature>
<feature type="transmembrane region" description="Helical" evidence="1">
    <location>
        <begin position="142"/>
        <end position="162"/>
    </location>
</feature>
<feature type="transmembrane region" description="Helical" evidence="1">
    <location>
        <begin position="173"/>
        <end position="193"/>
    </location>
</feature>
<feature type="transmembrane region" description="Helical" evidence="1">
    <location>
        <begin position="208"/>
        <end position="228"/>
    </location>
</feature>
<feature type="transmembrane region" description="Helical" evidence="1">
    <location>
        <begin position="252"/>
        <end position="272"/>
    </location>
</feature>
<feature type="transmembrane region" description="Helical" evidence="1">
    <location>
        <begin position="303"/>
        <end position="323"/>
    </location>
</feature>
<feature type="transmembrane region" description="Helical" evidence="1">
    <location>
        <begin position="351"/>
        <end position="371"/>
    </location>
</feature>
<feature type="transmembrane region" description="Helical" evidence="1">
    <location>
        <begin position="381"/>
        <end position="401"/>
    </location>
</feature>
<feature type="transmembrane region" description="Helical" evidence="1">
    <location>
        <begin position="408"/>
        <end position="428"/>
    </location>
</feature>
<feature type="transmembrane region" description="Helical" evidence="1">
    <location>
        <begin position="435"/>
        <end position="455"/>
    </location>
</feature>
<gene>
    <name evidence="1" type="primary">kup2</name>
    <name type="ordered locus">Saro_1512</name>
</gene>
<sequence length="634" mass="67725">MQTITRTSRNSLASLTLGAIGVVYGDIGTSPLYAFREALGQAARDGIVQAEIVGVLSLALWALIIVVTLKYVIFLSRMDNNGEGGVLSLMALAQRATGGGWVAVTLLGATGAALFYGDAIITPALSVLSAAEGLKTIPGLDGMSQTAIIGVTVGILAALFMFQSRGTASVATLFGPVCLVWFVALAGLGLWHIADAPEVLTAFNPLHAVTFLVSHGVTGLFVLGAVFLTVTGAEALIADMGHFGRRPIQLGWLSFVWPALTLNYLGQGALALKALAAAEAIGQPLANADWFFIMAPDVLRAPLVILATLATIIASQAVITGAYSLTHQAISLGLLPRLTIRQTSEHQMGQIYMPGVNWLLLGGVLLLVLGFKSSSAMAAAYGIAVTGTMVVTTCMAFLIAWKYWNWEPVWTALLIAPFLALDLFFFGANILRVSEGGWVPLLVAGLVGLVIFTWLKGRRTALARASEQGVSLNETVMALHARPPTRIEGTAVFLTQDLDVTPSALLHNLKHNKALHRNNIVLKVEIQARPYVAPEQRVVVDRIDESFLKARLRYGYMDTIDVPSDLARADGLLVGPGGTSFFVGRSAIRFAARPVLPRWMTVVYMFLHRNAADPTAYFSIPSNRVVELGSQIEL</sequence>
<evidence type="ECO:0000255" key="1">
    <source>
        <dbReference type="HAMAP-Rule" id="MF_01522"/>
    </source>
</evidence>
<organism>
    <name type="scientific">Novosphingobium aromaticivorans (strain ATCC 700278 / DSM 12444 / CCUG 56034 / CIP 105152 / NBRC 16084 / F199)</name>
    <dbReference type="NCBI Taxonomy" id="279238"/>
    <lineage>
        <taxon>Bacteria</taxon>
        <taxon>Pseudomonadati</taxon>
        <taxon>Pseudomonadota</taxon>
        <taxon>Alphaproteobacteria</taxon>
        <taxon>Sphingomonadales</taxon>
        <taxon>Sphingomonadaceae</taxon>
        <taxon>Novosphingobium</taxon>
    </lineage>
</organism>
<protein>
    <recommendedName>
        <fullName evidence="1">Probable potassium transport system protein Kup 2</fullName>
    </recommendedName>
</protein>
<reference key="1">
    <citation type="submission" date="2006-01" db="EMBL/GenBank/DDBJ databases">
        <title>Complete sequence of Novosphingobium aromaticivorans DSM 12444.</title>
        <authorList>
            <consortium name="US DOE Joint Genome Institute"/>
            <person name="Copeland A."/>
            <person name="Lucas S."/>
            <person name="Lapidus A."/>
            <person name="Barry K."/>
            <person name="Detter J.C."/>
            <person name="Glavina T."/>
            <person name="Hammon N."/>
            <person name="Israni S."/>
            <person name="Pitluck S."/>
            <person name="Chain P."/>
            <person name="Malfatti S."/>
            <person name="Shin M."/>
            <person name="Vergez L."/>
            <person name="Schmutz J."/>
            <person name="Larimer F."/>
            <person name="Land M."/>
            <person name="Kyrpides N."/>
            <person name="Ivanova N."/>
            <person name="Fredrickson J."/>
            <person name="Balkwill D."/>
            <person name="Romine M.F."/>
            <person name="Richardson P."/>
        </authorList>
    </citation>
    <scope>NUCLEOTIDE SEQUENCE [LARGE SCALE GENOMIC DNA]</scope>
    <source>
        <strain>ATCC 700278 / DSM 12444 / CCUG 56034 / CIP 105152 / NBRC 16084 / F199</strain>
    </source>
</reference>
<proteinExistence type="inferred from homology"/>
<keyword id="KW-0997">Cell inner membrane</keyword>
<keyword id="KW-1003">Cell membrane</keyword>
<keyword id="KW-0406">Ion transport</keyword>
<keyword id="KW-0472">Membrane</keyword>
<keyword id="KW-0630">Potassium</keyword>
<keyword id="KW-0633">Potassium transport</keyword>
<keyword id="KW-1185">Reference proteome</keyword>
<keyword id="KW-0769">Symport</keyword>
<keyword id="KW-0812">Transmembrane</keyword>
<keyword id="KW-1133">Transmembrane helix</keyword>
<keyword id="KW-0813">Transport</keyword>
<name>KUP2_NOVAD</name>
<comment type="function">
    <text evidence="1">Transport of potassium into the cell. Likely operates as a K(+):H(+) symporter.</text>
</comment>
<comment type="catalytic activity">
    <reaction evidence="1">
        <text>K(+)(in) + H(+)(in) = K(+)(out) + H(+)(out)</text>
        <dbReference type="Rhea" id="RHEA:28490"/>
        <dbReference type="ChEBI" id="CHEBI:15378"/>
        <dbReference type="ChEBI" id="CHEBI:29103"/>
    </reaction>
    <physiologicalReaction direction="right-to-left" evidence="1">
        <dbReference type="Rhea" id="RHEA:28492"/>
    </physiologicalReaction>
</comment>
<comment type="subcellular location">
    <subcellularLocation>
        <location evidence="1">Cell inner membrane</location>
        <topology evidence="1">Multi-pass membrane protein</topology>
    </subcellularLocation>
</comment>
<comment type="similarity">
    <text evidence="1">Belongs to the HAK/KUP transporter (TC 2.A.72) family.</text>
</comment>